<sequence>MTESLDLELDGINTEQRLLERRKAASERERLKQEVEDMVNLHQCKRGIFCVVKQAKLTYEKTTTGNRLSYKLPTQRQKLVLMVGEKPITVTQHSAETEGCLHFPYQGPEDLCTLIKTMCGIRDLIPFN</sequence>
<accession>P68976</accession>
<accession>P03249</accession>
<organism>
    <name type="scientific">Human adenovirus C serotype 2</name>
    <name type="common">HAdV-2</name>
    <name type="synonym">Human adenovirus 2</name>
    <dbReference type="NCBI Taxonomy" id="10515"/>
    <lineage>
        <taxon>Viruses</taxon>
        <taxon>Varidnaviria</taxon>
        <taxon>Bamfordvirae</taxon>
        <taxon>Preplasmiviricota</taxon>
        <taxon>Tectiliviricetes</taxon>
        <taxon>Rowavirales</taxon>
        <taxon>Adenoviridae</taxon>
        <taxon>Mastadenovirus</taxon>
        <taxon>Human mastadenovirus C</taxon>
    </lineage>
</organism>
<dbReference type="EMBL" id="J01917">
    <property type="status" value="NOT_ANNOTATED_CDS"/>
    <property type="molecule type" value="Genomic_DNA"/>
</dbReference>
<dbReference type="PIR" id="A03818">
    <property type="entry name" value="ERAD42"/>
</dbReference>
<dbReference type="RefSeq" id="AP_000188.1">
    <property type="nucleotide sequence ID" value="AC_000007.1"/>
</dbReference>
<dbReference type="Proteomes" id="UP000008167">
    <property type="component" value="Segment"/>
</dbReference>
<dbReference type="GO" id="GO:0030430">
    <property type="term" value="C:host cell cytoplasm"/>
    <property type="evidence" value="ECO:0007669"/>
    <property type="project" value="UniProtKB-SubCell"/>
</dbReference>
<dbReference type="GO" id="GO:0042025">
    <property type="term" value="C:host cell nucleus"/>
    <property type="evidence" value="ECO:0007669"/>
    <property type="project" value="UniProtKB-SubCell"/>
</dbReference>
<dbReference type="GO" id="GO:0052031">
    <property type="term" value="P:symbiont-mediated perturbation of host defense response"/>
    <property type="evidence" value="ECO:0007669"/>
    <property type="project" value="InterPro"/>
</dbReference>
<dbReference type="GO" id="GO:0033668">
    <property type="term" value="P:symbiont-mediated suppression of host apoptosis"/>
    <property type="evidence" value="ECO:0007669"/>
    <property type="project" value="UniProtKB-KW"/>
</dbReference>
<dbReference type="GO" id="GO:0085034">
    <property type="term" value="P:symbiont-mediated suppression of host NF-kappaB cascade"/>
    <property type="evidence" value="ECO:0007669"/>
    <property type="project" value="UniProtKB-KW"/>
</dbReference>
<dbReference type="InterPro" id="IPR004985">
    <property type="entry name" value="Adeno_E3-15"/>
</dbReference>
<dbReference type="Pfam" id="PF03307">
    <property type="entry name" value="Adeno_E3_15_3"/>
    <property type="match status" value="1"/>
</dbReference>
<feature type="chain" id="PRO_0000221745" description="Early 3 14.7 kDa protein">
    <location>
        <begin position="1"/>
        <end position="128"/>
    </location>
</feature>
<name>E3145_ADE02</name>
<reference key="1">
    <citation type="journal article" date="1981" name="Nucleic Acids Res.">
        <title>Nucleotide sequence of the EcoRI E fragment of adenovirus 2 genome.</title>
        <authorList>
            <person name="Herisse J."/>
            <person name="Galibert F."/>
        </authorList>
    </citation>
    <scope>NUCLEOTIDE SEQUENCE [GENOMIC DNA]</scope>
</reference>
<reference key="2">
    <citation type="journal article" date="1990" name="J. Virol.">
        <title>A protein serologically and functionally related to the group C E3 14,700-kilodalton protein is found in multiple adenovirus serotypes.</title>
        <authorList>
            <person name="Horton T.H."/>
            <person name="Tollefson A.E."/>
            <person name="Wold W.S.M."/>
            <person name="Gooding L.R."/>
        </authorList>
    </citation>
    <scope>IDENTIFICATION OF PROTEIN</scope>
</reference>
<reference key="3">
    <citation type="journal article" date="1997" name="J. Virol.">
        <title>Interaction of an adenovirus 14.7-kilodalton protein inhibitor of tumor necrosis factor alpha cytolysis with a new member of the GTPase superfamily of signal transducers.</title>
        <authorList>
            <person name="Li Y."/>
            <person name="Kang J."/>
            <person name="Horwitz M.S."/>
        </authorList>
    </citation>
    <scope>INTERACTION WITH HOST RRAGA</scope>
</reference>
<reference key="4">
    <citation type="journal article" date="1998" name="Mol. Cell. Biol.">
        <title>Interaction of an adenovirus E3 14.7-kilodalton protein with a novel tumor necrosis factor alpha-inducible cellular protein containing leucine zipper domains.</title>
        <authorList>
            <person name="Li Y."/>
            <person name="Kang J."/>
            <person name="Horwitz M.S."/>
        </authorList>
    </citation>
    <scope>INTERACTION WITH HOST OPTN</scope>
</reference>
<reference key="5">
    <citation type="journal article" date="1999" name="Proc. Natl. Acad. Sci. U.S.A.">
        <title>Identification of a cell protein (FIP-3) as a modulator of NF-kappaB activity and as a target of an adenovirus inhibitor of tumor necrosis factor alpha-induced apoptosis.</title>
        <authorList>
            <person name="Li Y."/>
            <person name="Kang J."/>
            <person name="Friedman J."/>
            <person name="Tarassishin L."/>
            <person name="Ye J."/>
            <person name="Kovalenko A."/>
            <person name="Wallach D."/>
            <person name="Horwitz M.S."/>
        </authorList>
    </citation>
    <scope>INTERACTION WITH HOST IKBKG</scope>
</reference>
<reference key="6">
    <citation type="journal article" date="2002" name="Protein Sci.">
        <title>Characterization of Ad5 E3-14.7K, an adenoviral inhibitor of apoptosis: structure, oligomeric state, and metal binding.</title>
        <authorList>
            <person name="Kim H.J."/>
            <person name="Foster M.P."/>
        </authorList>
    </citation>
    <scope>CHARACTERIZATION</scope>
    <source>
        <strain>Human adenovirus C serotype 5</strain>
    </source>
</reference>
<reference key="7">
    <citation type="journal article" date="2006" name="Immunology">
        <title>A novel mechanism of nuclear factor-kappaB regulation by adenoviral protein 14.7K.</title>
        <authorList>
            <person name="Carmody R.J."/>
            <person name="Maguschak K."/>
            <person name="Chen Y.H."/>
        </authorList>
    </citation>
    <scope>FUNCTION</scope>
</reference>
<reference key="8">
    <citation type="journal article" date="2012" name="PLoS ONE">
        <title>E3-14.7K is recruited to TNF-receptor 1 and blocks TNF cytolysis independent from interaction with optineurin.</title>
        <authorList>
            <person name="Klingseisen L."/>
            <person name="Ehrenschwender M."/>
            <person name="Heigl U."/>
            <person name="Wajant H."/>
            <person name="Hehlgans T."/>
            <person name="Schutze S."/>
            <person name="Schneider-Brachert W."/>
        </authorList>
    </citation>
    <scope>FUNCTION</scope>
</reference>
<evidence type="ECO:0000269" key="1">
    <source>
    </source>
</evidence>
<evidence type="ECO:0000269" key="2">
    <source>
    </source>
</evidence>
<evidence type="ECO:0000305" key="3"/>
<comment type="function">
    <text evidence="1 2">May prevent Nf-kappaB activation by immune signals like Tumor necrosis factor, presumably by inhibiting NFKB1 dimer DNA-binding. May act directly at the TNF receptor to inhibit signaling.</text>
</comment>
<comment type="subunit">
    <text>May bind to host IKBKG, OPTN and RRAGA.</text>
</comment>
<comment type="subcellular location">
    <subcellularLocation>
        <location>Host cytoplasm</location>
    </subcellularLocation>
    <subcellularLocation>
        <location>Host nucleus</location>
    </subcellularLocation>
</comment>
<comment type="similarity">
    <text evidence="3">Belongs to the adenoviridae E3_15 family.</text>
</comment>
<proteinExistence type="evidence at protein level"/>
<protein>
    <recommendedName>
        <fullName>Early 3 14.7 kDa protein</fullName>
        <shortName>E3-14.7k</shortName>
    </recommendedName>
</protein>
<keyword id="KW-0244">Early protein</keyword>
<keyword id="KW-1035">Host cytoplasm</keyword>
<keyword id="KW-1048">Host nucleus</keyword>
<keyword id="KW-0945">Host-virus interaction</keyword>
<keyword id="KW-1085">Inhibition of host caspases by virus</keyword>
<keyword id="KW-1100">Inhibition of host NF-kappa-B by virus</keyword>
<keyword id="KW-1119">Modulation of host cell apoptosis by virus</keyword>
<keyword id="KW-1185">Reference proteome</keyword>
<organismHost>
    <name type="scientific">Homo sapiens</name>
    <name type="common">Human</name>
    <dbReference type="NCBI Taxonomy" id="9606"/>
</organismHost>